<accession>P15877</accession>
<protein>
    <recommendedName>
        <fullName>Quinoprotein glucose dehydrogenase</fullName>
        <ecNumber evidence="3">1.1.5.2</ecNumber>
    </recommendedName>
    <alternativeName>
        <fullName>Glucose dehydrogenase [pyrroloquinoline-quinone]</fullName>
    </alternativeName>
</protein>
<comment type="function">
    <text evidence="5">GDH is probably involved in energy conservation rather than in sugar metabolism.</text>
</comment>
<comment type="catalytic activity">
    <reaction evidence="3">
        <text>a ubiquinone + D-glucose = D-glucono-1,5-lactone + a ubiquinol</text>
        <dbReference type="Rhea" id="RHEA:22152"/>
        <dbReference type="Rhea" id="RHEA-COMP:9565"/>
        <dbReference type="Rhea" id="RHEA-COMP:9566"/>
        <dbReference type="ChEBI" id="CHEBI:4167"/>
        <dbReference type="ChEBI" id="CHEBI:16217"/>
        <dbReference type="ChEBI" id="CHEBI:16389"/>
        <dbReference type="ChEBI" id="CHEBI:17976"/>
        <dbReference type="EC" id="1.1.5.2"/>
    </reaction>
    <physiologicalReaction direction="left-to-right" evidence="5">
        <dbReference type="Rhea" id="RHEA:22153"/>
    </physiologicalReaction>
</comment>
<comment type="cofactor">
    <cofactor>
        <name>pyrroloquinoline quinone</name>
        <dbReference type="ChEBI" id="CHEBI:58442"/>
    </cofactor>
</comment>
<comment type="subunit">
    <text>Monomer.</text>
</comment>
<comment type="interaction">
    <interactant intactId="EBI-545666">
        <id>P15877</id>
    </interactant>
    <interactant intactId="EBI-545660">
        <id>Q46925</id>
        <label>csdA</label>
    </interactant>
    <organismsDiffer>false</organismsDiffer>
    <experiments>2</experiments>
</comment>
<comment type="interaction">
    <interactant intactId="EBI-545666">
        <id>P15877</id>
    </interactant>
    <interactant intactId="EBI-560527">
        <id>P0AFQ7</id>
        <label>ycfH</label>
    </interactant>
    <organismsDiffer>false</organismsDiffer>
    <experiments>2</experiments>
</comment>
<comment type="subcellular location">
    <subcellularLocation>
        <location evidence="1 2">Cell inner membrane</location>
        <topology evidence="1 2">Multi-pass membrane protein</topology>
        <orientation evidence="1 2">Periplasmic side</orientation>
    </subcellularLocation>
</comment>
<comment type="similarity">
    <text evidence="4">Belongs to the bacterial PQQ dehydrogenase family.</text>
</comment>
<reference key="1">
    <citation type="journal article" date="1990" name="J. Bacteriol.">
        <title>Cloning, mapping, and sequencing of the gene encoding Escherichia coli quinoprotein glucose dehydrogenase.</title>
        <authorList>
            <person name="Cleton-Jansen A.-M."/>
            <person name="Goosen N."/>
            <person name="Fayet O."/>
            <person name="van de Putte P."/>
        </authorList>
    </citation>
    <scope>NUCLEOTIDE SEQUENCE [GENOMIC DNA]</scope>
    <source>
        <strain>K12</strain>
    </source>
</reference>
<reference key="2">
    <citation type="journal article" date="1993" name="J. Bacteriol.">
        <title>Characterization of the gcd gene from Escherichia coli K-12 W3110 and regulation of its expression.</title>
        <authorList>
            <person name="Yamada M."/>
            <person name="Asaoka S."/>
            <person name="Saier M.H. Jr."/>
            <person name="Yamada Y."/>
        </authorList>
    </citation>
    <scope>NUCLEOTIDE SEQUENCE [GENOMIC DNA]</scope>
    <source>
        <strain>K12 / W3110 / ATCC 27325 / DSM 5911</strain>
    </source>
</reference>
<reference key="3">
    <citation type="journal article" date="1994" name="Nucleic Acids Res.">
        <title>Systematic sequencing of the Escherichia coli genome: analysis of the 2.4-4.1 min (110,917-193,643 bp) region.</title>
        <authorList>
            <person name="Fujita N."/>
            <person name="Mori H."/>
            <person name="Yura T."/>
            <person name="Ishihama A."/>
        </authorList>
    </citation>
    <scope>NUCLEOTIDE SEQUENCE [LARGE SCALE GENOMIC DNA]</scope>
    <source>
        <strain>K12 / W3110 / ATCC 27325 / DSM 5911</strain>
    </source>
</reference>
<reference key="4">
    <citation type="journal article" date="1997" name="Science">
        <title>The complete genome sequence of Escherichia coli K-12.</title>
        <authorList>
            <person name="Blattner F.R."/>
            <person name="Plunkett G. III"/>
            <person name="Bloch C.A."/>
            <person name="Perna N.T."/>
            <person name="Burland V."/>
            <person name="Riley M."/>
            <person name="Collado-Vides J."/>
            <person name="Glasner J.D."/>
            <person name="Rode C.K."/>
            <person name="Mayhew G.F."/>
            <person name="Gregor J."/>
            <person name="Davis N.W."/>
            <person name="Kirkpatrick H.A."/>
            <person name="Goeden M.A."/>
            <person name="Rose D.J."/>
            <person name="Mau B."/>
            <person name="Shao Y."/>
        </authorList>
    </citation>
    <scope>NUCLEOTIDE SEQUENCE [LARGE SCALE GENOMIC DNA]</scope>
    <source>
        <strain>K12 / MG1655 / ATCC 47076</strain>
    </source>
</reference>
<reference key="5">
    <citation type="journal article" date="2006" name="Mol. Syst. Biol.">
        <title>Highly accurate genome sequences of Escherichia coli K-12 strains MG1655 and W3110.</title>
        <authorList>
            <person name="Hayashi K."/>
            <person name="Morooka N."/>
            <person name="Yamamoto Y."/>
            <person name="Fujita K."/>
            <person name="Isono K."/>
            <person name="Choi S."/>
            <person name="Ohtsubo E."/>
            <person name="Baba T."/>
            <person name="Wanner B.L."/>
            <person name="Mori H."/>
            <person name="Horiuchi T."/>
        </authorList>
    </citation>
    <scope>NUCLEOTIDE SEQUENCE [LARGE SCALE GENOMIC DNA]</scope>
    <source>
        <strain>K12 / W3110 / ATCC 27325 / DSM 5911</strain>
    </source>
</reference>
<reference key="6">
    <citation type="journal article" date="1993" name="J. Biol. Chem.">
        <title>Topological analysis of quinoprotein glucose dehydrogenase in Escherichia coli and its ubiquinone-binding site.</title>
        <authorList>
            <person name="Yamada M."/>
            <person name="Sumi K."/>
            <person name="Matsushita K."/>
            <person name="Adachi O."/>
            <person name="Yamada Y."/>
        </authorList>
    </citation>
    <scope>FUNCTION</scope>
    <scope>CATALYTIC ACTIVITY</scope>
    <scope>TOPOLOGY</scope>
</reference>
<reference key="7">
    <citation type="journal article" date="2005" name="J. Biol. Chem.">
        <title>Protein complexes of the Escherichia coli cell envelope.</title>
        <authorList>
            <person name="Stenberg F."/>
            <person name="Chovanec P."/>
            <person name="Maslen S.L."/>
            <person name="Robinson C.V."/>
            <person name="Ilag L."/>
            <person name="von Heijne G."/>
            <person name="Daley D.O."/>
        </authorList>
    </citation>
    <scope>SUBCELLULAR LOCATION</scope>
    <source>
        <strain>BL21-DE3</strain>
    </source>
</reference>
<reference key="8">
    <citation type="journal article" date="2005" name="Science">
        <title>Global topology analysis of the Escherichia coli inner membrane proteome.</title>
        <authorList>
            <person name="Daley D.O."/>
            <person name="Rapp M."/>
            <person name="Granseth E."/>
            <person name="Melen K."/>
            <person name="Drew D."/>
            <person name="von Heijne G."/>
        </authorList>
    </citation>
    <scope>SUBCELLULAR LOCATION</scope>
    <source>
        <strain>K12 / MG1655 / ATCC 47076</strain>
    </source>
</reference>
<reference key="9">
    <citation type="journal article" date="1995" name="Biochem. J.">
        <title>Structure of the quinoprotein glucose dehydrogenase of Escherichia coli modelled on that of methanol dehydrogenase from Methylobacterium extorquens.</title>
        <authorList>
            <person name="Cozier G.E."/>
            <person name="Anthony C."/>
        </authorList>
    </citation>
    <scope>3D-STRUCTURE MODELING</scope>
</reference>
<dbReference type="EC" id="1.1.5.2" evidence="3"/>
<dbReference type="EMBL" id="X51323">
    <property type="protein sequence ID" value="CAA35706.1"/>
    <property type="molecule type" value="Genomic_DNA"/>
</dbReference>
<dbReference type="EMBL" id="D12651">
    <property type="protein sequence ID" value="BAA02174.1"/>
    <property type="molecule type" value="Genomic_DNA"/>
</dbReference>
<dbReference type="EMBL" id="U00096">
    <property type="protein sequence ID" value="AAC73235.1"/>
    <property type="molecule type" value="Genomic_DNA"/>
</dbReference>
<dbReference type="EMBL" id="AP009048">
    <property type="protein sequence ID" value="BAB96699.1"/>
    <property type="molecule type" value="Genomic_DNA"/>
</dbReference>
<dbReference type="PIR" id="D64735">
    <property type="entry name" value="JV0107"/>
</dbReference>
<dbReference type="RefSeq" id="NP_414666.1">
    <property type="nucleotide sequence ID" value="NC_000913.3"/>
</dbReference>
<dbReference type="RefSeq" id="WP_001306211.1">
    <property type="nucleotide sequence ID" value="NZ_STEB01000010.1"/>
</dbReference>
<dbReference type="SMR" id="P15877"/>
<dbReference type="BioGRID" id="4261958">
    <property type="interactions" value="17"/>
</dbReference>
<dbReference type="DIP" id="DIP-9747N"/>
<dbReference type="FunCoup" id="P15877">
    <property type="interactions" value="80"/>
</dbReference>
<dbReference type="IntAct" id="P15877">
    <property type="interactions" value="9"/>
</dbReference>
<dbReference type="STRING" id="511145.b0124"/>
<dbReference type="jPOST" id="P15877"/>
<dbReference type="PaxDb" id="511145-b0124"/>
<dbReference type="EnsemblBacteria" id="AAC73235">
    <property type="protein sequence ID" value="AAC73235"/>
    <property type="gene ID" value="b0124"/>
</dbReference>
<dbReference type="GeneID" id="944830"/>
<dbReference type="KEGG" id="ecj:JW0120"/>
<dbReference type="KEGG" id="eco:b0124"/>
<dbReference type="KEGG" id="ecoc:C3026_00525"/>
<dbReference type="PATRIC" id="fig|1411691.4.peg.2158"/>
<dbReference type="EchoBASE" id="EB0364"/>
<dbReference type="eggNOG" id="COG4993">
    <property type="taxonomic scope" value="Bacteria"/>
</dbReference>
<dbReference type="HOGENOM" id="CLU_018478_1_0_6"/>
<dbReference type="InParanoid" id="P15877"/>
<dbReference type="OMA" id="FTHHDLW"/>
<dbReference type="OrthoDB" id="9794322at2"/>
<dbReference type="PhylomeDB" id="P15877"/>
<dbReference type="BioCyc" id="EcoCyc:GLUCDEHYDROG-MONOMER"/>
<dbReference type="BioCyc" id="MetaCyc:GLUCDEHYDROG-MONOMER"/>
<dbReference type="PRO" id="PR:P15877"/>
<dbReference type="Proteomes" id="UP000000625">
    <property type="component" value="Chromosome"/>
</dbReference>
<dbReference type="GO" id="GO:0016020">
    <property type="term" value="C:membrane"/>
    <property type="evidence" value="ECO:0000314"/>
    <property type="project" value="EcoCyc"/>
</dbReference>
<dbReference type="GO" id="GO:0030288">
    <property type="term" value="C:outer membrane-bounded periplasmic space"/>
    <property type="evidence" value="ECO:0007669"/>
    <property type="project" value="InterPro"/>
</dbReference>
<dbReference type="GO" id="GO:0005886">
    <property type="term" value="C:plasma membrane"/>
    <property type="evidence" value="ECO:0007669"/>
    <property type="project" value="UniProtKB-SubCell"/>
</dbReference>
<dbReference type="GO" id="GO:0000287">
    <property type="term" value="F:magnesium ion binding"/>
    <property type="evidence" value="ECO:0000314"/>
    <property type="project" value="EcoCyc"/>
</dbReference>
<dbReference type="GO" id="GO:0070968">
    <property type="term" value="F:pyrroloquinoline quinone binding"/>
    <property type="evidence" value="ECO:0000314"/>
    <property type="project" value="EcoCyc"/>
</dbReference>
<dbReference type="GO" id="GO:0008876">
    <property type="term" value="F:quinoprotein glucose dehydrogenase activity"/>
    <property type="evidence" value="ECO:0000314"/>
    <property type="project" value="EcoCyc"/>
</dbReference>
<dbReference type="GO" id="GO:0048039">
    <property type="term" value="F:ubiquinone binding"/>
    <property type="evidence" value="ECO:0000314"/>
    <property type="project" value="EcoCyc"/>
</dbReference>
<dbReference type="GO" id="GO:0019595">
    <property type="term" value="P:non-phosphorylated glucose catabolic process"/>
    <property type="evidence" value="ECO:0000269"/>
    <property type="project" value="EcoCyc"/>
</dbReference>
<dbReference type="CDD" id="cd10280">
    <property type="entry name" value="PQQ_mGDH"/>
    <property type="match status" value="1"/>
</dbReference>
<dbReference type="FunFam" id="2.140.10.10:FF:000001">
    <property type="entry name" value="Quinoprotein glucose dehydrogenase"/>
    <property type="match status" value="1"/>
</dbReference>
<dbReference type="Gene3D" id="2.140.10.10">
    <property type="entry name" value="Quinoprotein alcohol dehydrogenase-like superfamily"/>
    <property type="match status" value="1"/>
</dbReference>
<dbReference type="InterPro" id="IPR018391">
    <property type="entry name" value="PQQ_b-propeller_rpt"/>
</dbReference>
<dbReference type="InterPro" id="IPR017511">
    <property type="entry name" value="PQQ_mDH"/>
</dbReference>
<dbReference type="InterPro" id="IPR002372">
    <property type="entry name" value="PQQ_rpt_dom"/>
</dbReference>
<dbReference type="InterPro" id="IPR011047">
    <property type="entry name" value="Quinoprotein_ADH-like_sf"/>
</dbReference>
<dbReference type="InterPro" id="IPR001479">
    <property type="entry name" value="Quinoprotein_DH_CS"/>
</dbReference>
<dbReference type="NCBIfam" id="TIGR03074">
    <property type="entry name" value="PQQ_membr_DH"/>
    <property type="match status" value="1"/>
</dbReference>
<dbReference type="PANTHER" id="PTHR32303">
    <property type="entry name" value="QUINOPROTEIN ALCOHOL DEHYDROGENASE (CYTOCHROME C)"/>
    <property type="match status" value="1"/>
</dbReference>
<dbReference type="PANTHER" id="PTHR32303:SF4">
    <property type="entry name" value="QUINOPROTEIN GLUCOSE DEHYDROGENASE"/>
    <property type="match status" value="1"/>
</dbReference>
<dbReference type="Pfam" id="PF01011">
    <property type="entry name" value="PQQ"/>
    <property type="match status" value="1"/>
</dbReference>
<dbReference type="SMART" id="SM00564">
    <property type="entry name" value="PQQ"/>
    <property type="match status" value="6"/>
</dbReference>
<dbReference type="SUPFAM" id="SSF50998">
    <property type="entry name" value="Quinoprotein alcohol dehydrogenase-like"/>
    <property type="match status" value="1"/>
</dbReference>
<dbReference type="PROSITE" id="PS00363">
    <property type="entry name" value="BACTERIAL_PQQ_1"/>
    <property type="match status" value="1"/>
</dbReference>
<dbReference type="PROSITE" id="PS00364">
    <property type="entry name" value="BACTERIAL_PQQ_2"/>
    <property type="match status" value="1"/>
</dbReference>
<keyword id="KW-0997">Cell inner membrane</keyword>
<keyword id="KW-1003">Cell membrane</keyword>
<keyword id="KW-0472">Membrane</keyword>
<keyword id="KW-0560">Oxidoreductase</keyword>
<keyword id="KW-0634">PQQ</keyword>
<keyword id="KW-1185">Reference proteome</keyword>
<keyword id="KW-0812">Transmembrane</keyword>
<keyword id="KW-1133">Transmembrane helix</keyword>
<feature type="chain" id="PRO_0000205339" description="Quinoprotein glucose dehydrogenase">
    <location>
        <begin position="1"/>
        <end position="796"/>
    </location>
</feature>
<feature type="topological domain" description="Cytoplasmic" evidence="5">
    <location>
        <begin position="1"/>
        <end position="10"/>
    </location>
</feature>
<feature type="transmembrane region" description="Helical" evidence="4">
    <location>
        <begin position="11"/>
        <end position="37"/>
    </location>
</feature>
<feature type="topological domain" description="Periplasmic" evidence="5">
    <location>
        <begin position="38"/>
        <end position="40"/>
    </location>
</feature>
<feature type="transmembrane region" description="Helical" evidence="4">
    <location>
        <begin position="41"/>
        <end position="58"/>
    </location>
</feature>
<feature type="topological domain" description="Cytoplasmic" evidence="5">
    <location>
        <begin position="59"/>
        <end position="62"/>
    </location>
</feature>
<feature type="transmembrane region" description="Helical" evidence="4">
    <location>
        <begin position="63"/>
        <end position="81"/>
    </location>
</feature>
<feature type="topological domain" description="Periplasmic" evidence="5">
    <location>
        <begin position="82"/>
        <end position="95"/>
    </location>
</feature>
<feature type="transmembrane region" description="Helical" evidence="4">
    <location>
        <begin position="96"/>
        <end position="110"/>
    </location>
</feature>
<feature type="topological domain" description="Cytoplasmic" evidence="5">
    <location>
        <begin position="111"/>
        <end position="118"/>
    </location>
</feature>
<feature type="transmembrane region" description="Helical" evidence="4">
    <location>
        <begin position="119"/>
        <end position="141"/>
    </location>
</feature>
<feature type="topological domain" description="Periplasmic" evidence="5">
    <location>
        <begin position="142"/>
        <end position="796"/>
    </location>
</feature>
<feature type="active site" description="Proton acceptor" evidence="4">
    <location>
        <position position="466"/>
    </location>
</feature>
<feature type="sequence conflict" description="In Ref. 1; CAA35706." evidence="4" ref="1">
    <original>R</original>
    <variation>L</variation>
    <location>
        <position position="59"/>
    </location>
</feature>
<feature type="sequence conflict" description="In Ref. 1 and 2." evidence="4" ref="1 2">
    <original>TLSADATP</original>
    <variation>HLKRRCHT</variation>
    <location>
        <begin position="149"/>
        <end position="156"/>
    </location>
</feature>
<feature type="sequence conflict" description="In Ref. 1 and 2." evidence="4" ref="1 2">
    <original>N</original>
    <variation>K</variation>
    <location>
        <position position="193"/>
    </location>
</feature>
<feature type="sequence conflict" description="In Ref. 2; BAA02174." evidence="4" ref="2">
    <original>Q</original>
    <variation>H</variation>
    <location>
        <position position="666"/>
    </location>
</feature>
<name>DHG_ECOLI</name>
<sequence>MAINNTGSRRLLVTLTALFAALCGLYLLIGGGWLVAIGGSWYYPIAGLVMLGVAWMLWRSKRAALWLYAALLLGTMIWGVWEVGFDFWALTPRSDILVFFGIWLILPFVWRRLVIPASGAVAALVVALLISGGILTWAGFNDPQEINGTLSADATPAEAISPVADQDWPAYGRNQEGQRFSPLKQINADNVHNLKEAWVFRTGDVKQPNDPGEITNEVTPIKVGDTLYLCTAHQRLFALDAASGKEKWHYDPELKTNESFQHVTCRGVSYHEAKAETASPEVMADCPRRIILPVNDGRLIAINAENGKLCETFANKGVLNLQSNMPDTKPGLYEPTSPPIITDKTIVMAGSVTDNFSTRETSGVIRGFDVNTGELLWAFDPGAKDPNAIPSDEHTFTFNSPNSWAPAAYDAKLDLVYLPMGVTTPDIWGGNRTPEQERYASSILALNATTGKLAWSYQTVHHDLWDMDLPAQPTLADITVNGQKVPVIYAPAKTGNIFVLDRRNGELVVPAPEKPVPQGAAKGDYVTPTQPFSELSFRPTKDLSGADMWGATMFDQLVCRVMFHQMRYEGIFTPPSEQGTLVFPGNLGMFEWGGISVDPNREVAIANPMALPFVSKLIPRGPGNPMEQPKDAKGTGTESGIQPQYGVPYGVTLNPFLSPFGLPCKQPAWGYISALDLKTNEVVWKKRIGTPQDSMPFPMPVPVPFNMGMPMLGGPISTAGNVLFIAATADNYLRAYNMSNGEKLWQGRLPAGGQATPMTYEVNGKQYVVISAGGHGSFGTKMGDYIVAYALPDDVK</sequence>
<proteinExistence type="evidence at protein level"/>
<organism>
    <name type="scientific">Escherichia coli (strain K12)</name>
    <dbReference type="NCBI Taxonomy" id="83333"/>
    <lineage>
        <taxon>Bacteria</taxon>
        <taxon>Pseudomonadati</taxon>
        <taxon>Pseudomonadota</taxon>
        <taxon>Gammaproteobacteria</taxon>
        <taxon>Enterobacterales</taxon>
        <taxon>Enterobacteriaceae</taxon>
        <taxon>Escherichia</taxon>
    </lineage>
</organism>
<gene>
    <name type="primary">gcd</name>
    <name type="ordered locus">b0124</name>
    <name type="ordered locus">JW0120</name>
</gene>
<evidence type="ECO:0000269" key="1">
    <source>
    </source>
</evidence>
<evidence type="ECO:0000269" key="2">
    <source>
    </source>
</evidence>
<evidence type="ECO:0000269" key="3">
    <source>
    </source>
</evidence>
<evidence type="ECO:0000305" key="4"/>
<evidence type="ECO:0000305" key="5">
    <source>
    </source>
</evidence>